<protein>
    <recommendedName>
        <fullName>Glypican-1</fullName>
    </recommendedName>
    <alternativeName>
        <fullName>HSPG M12</fullName>
    </alternativeName>
    <component>
        <recommendedName>
            <fullName>Secreted glypican-1</fullName>
        </recommendedName>
    </component>
</protein>
<organism>
    <name type="scientific">Rattus norvegicus</name>
    <name type="common">Rat</name>
    <dbReference type="NCBI Taxonomy" id="10116"/>
    <lineage>
        <taxon>Eukaryota</taxon>
        <taxon>Metazoa</taxon>
        <taxon>Chordata</taxon>
        <taxon>Craniata</taxon>
        <taxon>Vertebrata</taxon>
        <taxon>Euteleostomi</taxon>
        <taxon>Mammalia</taxon>
        <taxon>Eutheria</taxon>
        <taxon>Euarchontoglires</taxon>
        <taxon>Glires</taxon>
        <taxon>Rodentia</taxon>
        <taxon>Myomorpha</taxon>
        <taxon>Muroidea</taxon>
        <taxon>Muridae</taxon>
        <taxon>Murinae</taxon>
        <taxon>Rattus</taxon>
    </lineage>
</organism>
<proteinExistence type="evidence at protein level"/>
<gene>
    <name type="primary">Gpc1</name>
</gene>
<comment type="function">
    <text evidence="1 6 7">Cell surface proteoglycan that bears heparan sulfate. May act as a catalyst in increasing the rate of conversion of prion protein PRPN(C) to PRNP(Sc) via associating (via the heparan sulfate side chains) with both forms of PRPN, targeting them to lipid rafts and facilitating their interaction. Required for proper skeletal muscle differentiation by sequestering FGF2 in lipid rafts preventing its binding to receptors (FGFRs) and inhibiting the FGF-mediated signaling. Binds Cu(2+) or Zn(2+) ions (By similarity). Binds, via the heparan sulfate side chains, alpha-4 (V) collagen and participates in Schwann cell myelination.</text>
</comment>
<comment type="subcellular location">
    <subcellularLocation>
        <location>Cell membrane</location>
        <topology>Lipid-anchor</topology>
        <topology>GPI-anchor</topology>
        <orientation>Extracellular side</orientation>
    </subcellularLocation>
    <subcellularLocation>
        <location evidence="1">Endosome</location>
    </subcellularLocation>
    <text evidence="1">S-nitrosylated form recycled in endosomes. Localizes to CAV1-containing vesicles close to the cell surface. Cleavage of heparan sulfate side chains takes place mainly in late endosomes. Associates with both forms of PRNP in lipid rafts. Colocalizes with APP in perinuclear compartments and with CP in intracellular compartments (By similarity).</text>
</comment>
<comment type="subcellular location">
    <molecule>Secreted glypican-1</molecule>
    <subcellularLocation>
        <location evidence="1">Secreted</location>
        <location evidence="1">Extracellular space</location>
    </subcellularLocation>
</comment>
<comment type="tissue specificity">
    <text evidence="8">Nervous system.</text>
</comment>
<comment type="PTM">
    <text>S-nitrosylated in a Cu(2+)-dependent manner. Nitric acid (NO) is released from the nitrosylated cysteines by ascorbate or by some other reducing agent, in a Cu(2+) or Zn(2+) dependent manner. This free nitric oxide is then capable of cleaving the heparan sulfate side chains.</text>
</comment>
<comment type="PTM">
    <text evidence="5">N- and O-glycosylated. N-glycosylation is mainly of the complex type containing sialic acid. O-glycosylated with heparan sulfate. The heparan sulfate chains can be cleaved either by the action of heparanase or, degraded by a deaminative process that uses nitric oxide (NO) released from the S-nitrosylated cysteines. This process is triggered by ascorbate, or by some other reducing agent, in a Cu(2+)- or Zn(2+) dependent manner. Cu(2+) ions are provided by ceruloproteins such as APP, PRNP or CP which associate with GCP1 in intracellular compartments or lipid rafts.</text>
</comment>
<comment type="PTM">
    <text>This cell-associated glypican is further processed to give rise to a medium-released species.</text>
</comment>
<comment type="similarity">
    <text evidence="9">Belongs to the glypican family.</text>
</comment>
<dbReference type="EMBL" id="L02896">
    <property type="protein sequence ID" value="AAA86439.1"/>
    <property type="molecule type" value="mRNA"/>
</dbReference>
<dbReference type="EMBL" id="L34067">
    <property type="protein sequence ID" value="AAA41251.1"/>
    <property type="molecule type" value="mRNA"/>
</dbReference>
<dbReference type="PIR" id="I56545">
    <property type="entry name" value="I56545"/>
</dbReference>
<dbReference type="RefSeq" id="NP_110455.1">
    <property type="nucleotide sequence ID" value="NM_030828.1"/>
</dbReference>
<dbReference type="SMR" id="P35053"/>
<dbReference type="BioGRID" id="248661">
    <property type="interactions" value="3"/>
</dbReference>
<dbReference type="FunCoup" id="P35053">
    <property type="interactions" value="1453"/>
</dbReference>
<dbReference type="IntAct" id="P35053">
    <property type="interactions" value="1"/>
</dbReference>
<dbReference type="STRING" id="10116.ENSRNOP00000066597"/>
<dbReference type="GlyCosmos" id="P35053">
    <property type="glycosylation" value="5 sites, 3 glycans"/>
</dbReference>
<dbReference type="GlyGen" id="P35053">
    <property type="glycosylation" value="5 sites, 3 N-linked glycans (1 site)"/>
</dbReference>
<dbReference type="iPTMnet" id="P35053"/>
<dbReference type="PhosphoSitePlus" id="P35053"/>
<dbReference type="jPOST" id="P35053"/>
<dbReference type="PaxDb" id="10116-ENSRNOP00000066597"/>
<dbReference type="GeneID" id="58920"/>
<dbReference type="KEGG" id="rno:58920"/>
<dbReference type="AGR" id="RGD:61853"/>
<dbReference type="CTD" id="2817"/>
<dbReference type="RGD" id="61853">
    <property type="gene designation" value="Gpc1"/>
</dbReference>
<dbReference type="eggNOG" id="KOG3821">
    <property type="taxonomic scope" value="Eukaryota"/>
</dbReference>
<dbReference type="InParanoid" id="P35053"/>
<dbReference type="OrthoDB" id="10010764at2759"/>
<dbReference type="PhylomeDB" id="P35053"/>
<dbReference type="Reactome" id="R-RNO-1971475">
    <property type="pathway name" value="A tetrasaccharide linker sequence is required for GAG synthesis"/>
</dbReference>
<dbReference type="Reactome" id="R-RNO-2022928">
    <property type="pathway name" value="HS-GAG biosynthesis"/>
</dbReference>
<dbReference type="Reactome" id="R-RNO-2024096">
    <property type="pathway name" value="HS-GAG degradation"/>
</dbReference>
<dbReference type="Reactome" id="R-RNO-202733">
    <property type="pathway name" value="Cell surface interactions at the vascular wall"/>
</dbReference>
<dbReference type="Reactome" id="R-RNO-975634">
    <property type="pathway name" value="Retinoid metabolism and transport"/>
</dbReference>
<dbReference type="PRO" id="PR:P35053"/>
<dbReference type="Proteomes" id="UP000002494">
    <property type="component" value="Unplaced"/>
</dbReference>
<dbReference type="GO" id="GO:0009986">
    <property type="term" value="C:cell surface"/>
    <property type="evidence" value="ECO:0000318"/>
    <property type="project" value="GO_Central"/>
</dbReference>
<dbReference type="GO" id="GO:0005768">
    <property type="term" value="C:endosome"/>
    <property type="evidence" value="ECO:0007669"/>
    <property type="project" value="UniProtKB-SubCell"/>
</dbReference>
<dbReference type="GO" id="GO:0031012">
    <property type="term" value="C:extracellular matrix"/>
    <property type="evidence" value="ECO:0000250"/>
    <property type="project" value="UniProtKB"/>
</dbReference>
<dbReference type="GO" id="GO:0005576">
    <property type="term" value="C:extracellular region"/>
    <property type="evidence" value="ECO:0007669"/>
    <property type="project" value="UniProtKB-SubCell"/>
</dbReference>
<dbReference type="GO" id="GO:0045121">
    <property type="term" value="C:membrane raft"/>
    <property type="evidence" value="ECO:0000250"/>
    <property type="project" value="UniProtKB"/>
</dbReference>
<dbReference type="GO" id="GO:0043025">
    <property type="term" value="C:neuronal cell body"/>
    <property type="evidence" value="ECO:0000314"/>
    <property type="project" value="RGD"/>
</dbReference>
<dbReference type="GO" id="GO:0005886">
    <property type="term" value="C:plasma membrane"/>
    <property type="evidence" value="ECO:0007669"/>
    <property type="project" value="UniProtKB-SubCell"/>
</dbReference>
<dbReference type="GO" id="GO:0098552">
    <property type="term" value="C:side of membrane"/>
    <property type="evidence" value="ECO:0007669"/>
    <property type="project" value="UniProtKB-KW"/>
</dbReference>
<dbReference type="GO" id="GO:0045202">
    <property type="term" value="C:synapse"/>
    <property type="evidence" value="ECO:0000266"/>
    <property type="project" value="RGD"/>
</dbReference>
<dbReference type="GO" id="GO:0070052">
    <property type="term" value="F:collagen V binding"/>
    <property type="evidence" value="ECO:0000353"/>
    <property type="project" value="RGD"/>
</dbReference>
<dbReference type="GO" id="GO:0005507">
    <property type="term" value="F:copper ion binding"/>
    <property type="evidence" value="ECO:0000250"/>
    <property type="project" value="UniProtKB"/>
</dbReference>
<dbReference type="GO" id="GO:0017134">
    <property type="term" value="F:fibroblast growth factor binding"/>
    <property type="evidence" value="ECO:0000250"/>
    <property type="project" value="UniProtKB"/>
</dbReference>
<dbReference type="GO" id="GO:0043236">
    <property type="term" value="F:laminin binding"/>
    <property type="evidence" value="ECO:0000250"/>
    <property type="project" value="UniProtKB"/>
</dbReference>
<dbReference type="GO" id="GO:0016477">
    <property type="term" value="P:cell migration"/>
    <property type="evidence" value="ECO:0000318"/>
    <property type="project" value="GO_Central"/>
</dbReference>
<dbReference type="GO" id="GO:0030200">
    <property type="term" value="P:heparan sulfate proteoglycan catabolic process"/>
    <property type="evidence" value="ECO:0000250"/>
    <property type="project" value="UniProtKB"/>
</dbReference>
<dbReference type="GO" id="GO:0032288">
    <property type="term" value="P:myelin assembly"/>
    <property type="evidence" value="ECO:0000314"/>
    <property type="project" value="UniProtKB"/>
</dbReference>
<dbReference type="GO" id="GO:0040037">
    <property type="term" value="P:negative regulation of fibroblast growth factor receptor signaling pathway"/>
    <property type="evidence" value="ECO:0000250"/>
    <property type="project" value="UniProtKB"/>
</dbReference>
<dbReference type="GO" id="GO:2001016">
    <property type="term" value="P:positive regulation of skeletal muscle cell differentiation"/>
    <property type="evidence" value="ECO:0000250"/>
    <property type="project" value="UniProtKB"/>
</dbReference>
<dbReference type="GO" id="GO:1905475">
    <property type="term" value="P:regulation of protein localization to membrane"/>
    <property type="evidence" value="ECO:0000318"/>
    <property type="project" value="GO_Central"/>
</dbReference>
<dbReference type="GO" id="GO:0014037">
    <property type="term" value="P:Schwann cell differentiation"/>
    <property type="evidence" value="ECO:0000314"/>
    <property type="project" value="UniProtKB"/>
</dbReference>
<dbReference type="InterPro" id="IPR001863">
    <property type="entry name" value="Glypican"/>
</dbReference>
<dbReference type="InterPro" id="IPR019803">
    <property type="entry name" value="Glypican_CS"/>
</dbReference>
<dbReference type="PANTHER" id="PTHR10822">
    <property type="entry name" value="GLYPICAN"/>
    <property type="match status" value="1"/>
</dbReference>
<dbReference type="PANTHER" id="PTHR10822:SF8">
    <property type="entry name" value="GLYPICAN-1"/>
    <property type="match status" value="1"/>
</dbReference>
<dbReference type="Pfam" id="PF01153">
    <property type="entry name" value="Glypican"/>
    <property type="match status" value="1"/>
</dbReference>
<dbReference type="PROSITE" id="PS01207">
    <property type="entry name" value="GLYPICAN"/>
    <property type="match status" value="1"/>
</dbReference>
<feature type="signal peptide" evidence="4">
    <location>
        <begin position="1"/>
        <end position="23"/>
    </location>
</feature>
<feature type="chain" id="PRO_0000012299" description="Glypican-1">
    <location>
        <begin position="24"/>
        <end position="530"/>
    </location>
</feature>
<feature type="chain" id="PRO_0000333839" description="Secreted glypican-1">
    <location>
        <begin position="24"/>
        <end status="unknown"/>
    </location>
</feature>
<feature type="propeptide" id="PRO_0000012300" description="Removed in mature form" evidence="2">
    <location>
        <begin position="531"/>
        <end position="558"/>
    </location>
</feature>
<feature type="region of interest" description="Disordered" evidence="3">
    <location>
        <begin position="478"/>
        <end position="531"/>
    </location>
</feature>
<feature type="lipid moiety-binding region" description="GPI-anchor amidated serine" evidence="2">
    <location>
        <position position="530"/>
    </location>
</feature>
<feature type="glycosylation site" description="N-linked (GlcNAc...) asparagine" evidence="10">
    <location>
        <position position="79"/>
    </location>
</feature>
<feature type="glycosylation site" description="N-linked (GlcNAc...) asparagine" evidence="10">
    <location>
        <position position="116"/>
    </location>
</feature>
<feature type="glycosylation site" description="O-linked (Xyl...) (heparan sulfate) serine" evidence="2">
    <location>
        <position position="486"/>
    </location>
</feature>
<feature type="glycosylation site" description="O-linked (Xyl...) (heparan sulfate) serine" evidence="2">
    <location>
        <position position="488"/>
    </location>
</feature>
<feature type="glycosylation site" description="O-linked (Xyl...) (heparan sulfate) serine" evidence="2">
    <location>
        <position position="490"/>
    </location>
</feature>
<feature type="disulfide bond" evidence="1">
    <location>
        <begin position="32"/>
        <end position="68"/>
    </location>
</feature>
<feature type="disulfide bond" evidence="1">
    <location>
        <begin position="62"/>
        <end position="256"/>
    </location>
</feature>
<feature type="disulfide bond" evidence="1">
    <location>
        <begin position="69"/>
        <end position="259"/>
    </location>
</feature>
<feature type="disulfide bond" evidence="1">
    <location>
        <begin position="191"/>
        <end position="343"/>
    </location>
</feature>
<feature type="disulfide bond" evidence="1">
    <location>
        <begin position="246"/>
        <end position="279"/>
    </location>
</feature>
<feature type="disulfide bond" evidence="1">
    <location>
        <begin position="268"/>
        <end position="415"/>
    </location>
</feature>
<feature type="disulfide bond" evidence="1">
    <location>
        <begin position="272"/>
        <end position="401"/>
    </location>
</feature>
<feature type="sequence conflict" description="In Ref. 2; AAA41251." evidence="9" ref="2">
    <original>T</original>
    <variation>A</variation>
    <location>
        <position position="21"/>
    </location>
</feature>
<feature type="sequence conflict" description="In Ref. 2; AAA41251." evidence="9" ref="2">
    <original>Y</original>
    <variation>N</variation>
    <location>
        <position position="312"/>
    </location>
</feature>
<feature type="sequence conflict" description="In Ref. 2; AAA41251." evidence="9" ref="2">
    <original>A</original>
    <variation>G</variation>
    <location>
        <position position="362"/>
    </location>
</feature>
<feature type="sequence conflict" description="In Ref. 2; AA sequence." evidence="9" ref="2">
    <original>I</original>
    <variation>G</variation>
    <location>
        <position position="437"/>
    </location>
</feature>
<feature type="sequence conflict" description="In Ref. 2; AA sequence." evidence="9" ref="2">
    <original>E</original>
    <variation>D</variation>
    <location>
        <position position="443"/>
    </location>
</feature>
<feature type="sequence conflict" description="In Ref. 2; AAA41251." evidence="9" ref="2">
    <original>I</original>
    <variation>T</variation>
    <location>
        <position position="515"/>
    </location>
</feature>
<evidence type="ECO:0000250" key="1"/>
<evidence type="ECO:0000255" key="2"/>
<evidence type="ECO:0000256" key="3">
    <source>
        <dbReference type="SAM" id="MobiDB-lite"/>
    </source>
</evidence>
<evidence type="ECO:0000269" key="4">
    <source>
    </source>
</evidence>
<evidence type="ECO:0000269" key="5">
    <source>
    </source>
</evidence>
<evidence type="ECO:0000269" key="6">
    <source>
    </source>
</evidence>
<evidence type="ECO:0000269" key="7">
    <source>
    </source>
</evidence>
<evidence type="ECO:0000269" key="8">
    <source>
    </source>
</evidence>
<evidence type="ECO:0000305" key="9"/>
<evidence type="ECO:0000305" key="10">
    <source>
    </source>
</evidence>
<keyword id="KW-1003">Cell membrane</keyword>
<keyword id="KW-0186">Copper</keyword>
<keyword id="KW-0903">Direct protein sequencing</keyword>
<keyword id="KW-1015">Disulfide bond</keyword>
<keyword id="KW-0967">Endosome</keyword>
<keyword id="KW-0325">Glycoprotein</keyword>
<keyword id="KW-0336">GPI-anchor</keyword>
<keyword id="KW-0357">Heparan sulfate</keyword>
<keyword id="KW-0449">Lipoprotein</keyword>
<keyword id="KW-0472">Membrane</keyword>
<keyword id="KW-0654">Proteoglycan</keyword>
<keyword id="KW-1185">Reference proteome</keyword>
<keyword id="KW-0964">Secreted</keyword>
<keyword id="KW-0732">Signal</keyword>
<keyword id="KW-0862">Zinc</keyword>
<name>GPC1_RAT</name>
<reference key="1">
    <citation type="journal article" date="1992" name="Biochem. Biophys. Res. Commun.">
        <title>Cloning of a major heparan sulfate proteoglycan from brain and identification as the rat form of glypican.</title>
        <authorList>
            <person name="Karthikeyan L."/>
            <person name="Maurel P."/>
            <person name="Rauch U."/>
            <person name="Margolis R.K."/>
            <person name="Margolis R.U."/>
        </authorList>
    </citation>
    <scope>NUCLEOTIDE SEQUENCE [MRNA]</scope>
    <scope>PROTEIN SEQUENCE OF 24-55 AND 424-445</scope>
    <source>
        <tissue>Brain</tissue>
    </source>
</reference>
<reference key="2">
    <citation type="journal article" date="1994" name="J. Neurosci.">
        <title>Neuronal expression of glypican, a cell-surface glycosylphosphatidylinositol-anchored heparan sulfate proteoglycan, in the adult rat nervous system.</title>
        <authorList>
            <person name="Litwack E.D."/>
            <person name="Stipp C.S."/>
            <person name="Kumbasar A."/>
            <person name="Lander A.D."/>
        </authorList>
    </citation>
    <scope>NUCLEOTIDE SEQUENCE [MRNA]</scope>
    <scope>TISSUE SPECIFICITY</scope>
    <scope>PROTEIN SEQUENCE OF 83-112; 196-207 AND 422-443</scope>
    <source>
        <strain>New England Deaconess Hospital</strain>
    </source>
</reference>
<reference key="3">
    <citation type="journal article" date="2004" name="J. Biol. Chem.">
        <title>Involvement of glycosylphosphatidylinositol-linked ceruloplasmin in the copper/zinc-nitric oxide-dependent degradation of glypican-1 heparan sulfate in rat C6 glioma cells.</title>
        <authorList>
            <person name="Mani K."/>
            <person name="Cheng F."/>
            <person name="Havsmark B."/>
            <person name="David S."/>
            <person name="Fransson L.A."/>
        </authorList>
    </citation>
    <scope>COPPER-BINDING</scope>
    <scope>GLYCOSYLATION</scope>
    <scope>SUBCELLULAR LOCATION</scope>
</reference>
<reference key="4">
    <citation type="journal article" date="2004" name="J. Biol. Chem.">
        <title>Constitutive release of alpha4 type V collagen N-terminal domain by Schwann cells and binding to cell surface and extracellular matrix heparan sulfate proteoglycans.</title>
        <authorList>
            <person name="Rothblum K."/>
            <person name="Stahl R.C."/>
            <person name="Carey D.J."/>
        </authorList>
    </citation>
    <scope>FUNCTION</scope>
    <scope>SUBCELLULAR LOCATION</scope>
</reference>
<reference key="5">
    <citation type="journal article" date="2006" name="J. Neurosci.">
        <title>Glypican-1 and alpha4(V) collagen are required for Schwann cell myelination.</title>
        <authorList>
            <person name="Chernousov M.A."/>
            <person name="Rothblum K."/>
            <person name="Stahl R.C."/>
            <person name="Evans A."/>
            <person name="Prentiss L."/>
            <person name="Carey D.J."/>
        </authorList>
    </citation>
    <scope>FUNCTION</scope>
    <scope>SUBCELLULAR LOCATION</scope>
</reference>
<sequence length="558" mass="61734">MELRARGWWLLCAAAALVACTRGDPASKSRSCSEVRQIYGAKGFSLSDVPQAEISGEHLRICPQGYTCCTSEMEENLANHSRMELETALHDSSRALQATLATQLHGIDDHFQRLLNDSERTLQDAFPGAFGDLYTQNTRAFRDLYAELRLYYRGANLHLEETLAEFWARLLERLFKQLHPQLLLPDDYLDCLGKQAEALRPFGDAPRELRLRATRAFVAARSFVQGLGVASDVVRKVAQVPLAPECSRAVMKLVYCAHCRGVPGARPCPDYCRNVLKGCLANQADLDAEWRNLLDSMVLITDKFWGPSGAEYVIGSVHMWLAEAINALQDNKDTLTAKVIQGCGNPKVNPHGSGPEEKRRRAKLALQEKSSTGTLEKLVSEAKAQLRDIQDYWISLPGTLCSEKMAMSPASDDRCWNGISKGRYLPEVMGDGLANQINNPEVEVDITKPDMTIRQQIMQLKIMTNRLRGAYGGNDVDFQDASDDGSGSGSGGGCPDDACGRRVSKKSSSSRTPLIHALPGLSEQEGQKTSAATRPEPHYFFLLFLFTLVLAAARPRWR</sequence>
<accession>P35053</accession>